<feature type="chain" id="PRO_1000101109" description="Lysine--tRNA ligase">
    <location>
        <begin position="1"/>
        <end position="504"/>
    </location>
</feature>
<feature type="binding site" evidence="1">
    <location>
        <position position="411"/>
    </location>
    <ligand>
        <name>Mg(2+)</name>
        <dbReference type="ChEBI" id="CHEBI:18420"/>
        <label>1</label>
    </ligand>
</feature>
<feature type="binding site" evidence="1">
    <location>
        <position position="418"/>
    </location>
    <ligand>
        <name>Mg(2+)</name>
        <dbReference type="ChEBI" id="CHEBI:18420"/>
        <label>1</label>
    </ligand>
</feature>
<feature type="binding site" evidence="1">
    <location>
        <position position="418"/>
    </location>
    <ligand>
        <name>Mg(2+)</name>
        <dbReference type="ChEBI" id="CHEBI:18420"/>
        <label>2</label>
    </ligand>
</feature>
<reference key="1">
    <citation type="journal article" date="2007" name="PLoS ONE">
        <title>Analysis of the neurotoxin complex genes in Clostridium botulinum A1-A4 and B1 strains: BoNT/A3, /Ba4 and /B1 clusters are located within plasmids.</title>
        <authorList>
            <person name="Smith T.J."/>
            <person name="Hill K.K."/>
            <person name="Foley B.T."/>
            <person name="Detter J.C."/>
            <person name="Munk A.C."/>
            <person name="Bruce D.C."/>
            <person name="Doggett N.A."/>
            <person name="Smith L.A."/>
            <person name="Marks J.D."/>
            <person name="Xie G."/>
            <person name="Brettin T.S."/>
        </authorList>
    </citation>
    <scope>NUCLEOTIDE SEQUENCE [LARGE SCALE GENOMIC DNA]</scope>
    <source>
        <strain>ATCC 19397 / Type A</strain>
    </source>
</reference>
<protein>
    <recommendedName>
        <fullName evidence="1">Lysine--tRNA ligase</fullName>
        <ecNumber evidence="1">6.1.1.6</ecNumber>
    </recommendedName>
    <alternativeName>
        <fullName evidence="1">Lysyl-tRNA synthetase</fullName>
        <shortName evidence="1">LysRS</shortName>
    </alternativeName>
</protein>
<organism>
    <name type="scientific">Clostridium botulinum (strain ATCC 19397 / Type A)</name>
    <dbReference type="NCBI Taxonomy" id="441770"/>
    <lineage>
        <taxon>Bacteria</taxon>
        <taxon>Bacillati</taxon>
        <taxon>Bacillota</taxon>
        <taxon>Clostridia</taxon>
        <taxon>Eubacteriales</taxon>
        <taxon>Clostridiaceae</taxon>
        <taxon>Clostridium</taxon>
    </lineage>
</organism>
<evidence type="ECO:0000255" key="1">
    <source>
        <dbReference type="HAMAP-Rule" id="MF_00252"/>
    </source>
</evidence>
<proteinExistence type="inferred from homology"/>
<keyword id="KW-0030">Aminoacyl-tRNA synthetase</keyword>
<keyword id="KW-0067">ATP-binding</keyword>
<keyword id="KW-0963">Cytoplasm</keyword>
<keyword id="KW-0436">Ligase</keyword>
<keyword id="KW-0460">Magnesium</keyword>
<keyword id="KW-0479">Metal-binding</keyword>
<keyword id="KW-0547">Nucleotide-binding</keyword>
<keyword id="KW-0648">Protein biosynthesis</keyword>
<accession>A7FZA5</accession>
<gene>
    <name evidence="1" type="primary">lysS</name>
    <name type="ordered locus">CLB_3593</name>
</gene>
<dbReference type="EC" id="6.1.1.6" evidence="1"/>
<dbReference type="EMBL" id="CP000726">
    <property type="protein sequence ID" value="ABS33860.1"/>
    <property type="molecule type" value="Genomic_DNA"/>
</dbReference>
<dbReference type="RefSeq" id="WP_012048371.1">
    <property type="nucleotide sequence ID" value="NC_009697.1"/>
</dbReference>
<dbReference type="SMR" id="A7FZA5"/>
<dbReference type="GeneID" id="5187733"/>
<dbReference type="KEGG" id="cba:CLB_3593"/>
<dbReference type="HOGENOM" id="CLU_008255_6_0_9"/>
<dbReference type="GO" id="GO:0005829">
    <property type="term" value="C:cytosol"/>
    <property type="evidence" value="ECO:0007669"/>
    <property type="project" value="TreeGrafter"/>
</dbReference>
<dbReference type="GO" id="GO:0005524">
    <property type="term" value="F:ATP binding"/>
    <property type="evidence" value="ECO:0007669"/>
    <property type="project" value="UniProtKB-UniRule"/>
</dbReference>
<dbReference type="GO" id="GO:0140096">
    <property type="term" value="F:catalytic activity, acting on a protein"/>
    <property type="evidence" value="ECO:0007669"/>
    <property type="project" value="UniProtKB-ARBA"/>
</dbReference>
<dbReference type="GO" id="GO:0004824">
    <property type="term" value="F:lysine-tRNA ligase activity"/>
    <property type="evidence" value="ECO:0007669"/>
    <property type="project" value="UniProtKB-UniRule"/>
</dbReference>
<dbReference type="GO" id="GO:0000287">
    <property type="term" value="F:magnesium ion binding"/>
    <property type="evidence" value="ECO:0007669"/>
    <property type="project" value="UniProtKB-UniRule"/>
</dbReference>
<dbReference type="GO" id="GO:0016740">
    <property type="term" value="F:transferase activity"/>
    <property type="evidence" value="ECO:0007669"/>
    <property type="project" value="UniProtKB-ARBA"/>
</dbReference>
<dbReference type="GO" id="GO:0000049">
    <property type="term" value="F:tRNA binding"/>
    <property type="evidence" value="ECO:0007669"/>
    <property type="project" value="TreeGrafter"/>
</dbReference>
<dbReference type="GO" id="GO:0006430">
    <property type="term" value="P:lysyl-tRNA aminoacylation"/>
    <property type="evidence" value="ECO:0007669"/>
    <property type="project" value="UniProtKB-UniRule"/>
</dbReference>
<dbReference type="CDD" id="cd00775">
    <property type="entry name" value="LysRS_core"/>
    <property type="match status" value="1"/>
</dbReference>
<dbReference type="CDD" id="cd04322">
    <property type="entry name" value="LysRS_N"/>
    <property type="match status" value="1"/>
</dbReference>
<dbReference type="FunFam" id="2.40.50.140:FF:000024">
    <property type="entry name" value="Lysine--tRNA ligase"/>
    <property type="match status" value="1"/>
</dbReference>
<dbReference type="FunFam" id="3.30.930.10:FF:000001">
    <property type="entry name" value="Lysine--tRNA ligase"/>
    <property type="match status" value="1"/>
</dbReference>
<dbReference type="Gene3D" id="3.30.930.10">
    <property type="entry name" value="Bira Bifunctional Protein, Domain 2"/>
    <property type="match status" value="1"/>
</dbReference>
<dbReference type="Gene3D" id="2.40.50.140">
    <property type="entry name" value="Nucleic acid-binding proteins"/>
    <property type="match status" value="1"/>
</dbReference>
<dbReference type="HAMAP" id="MF_00252">
    <property type="entry name" value="Lys_tRNA_synth_class2"/>
    <property type="match status" value="1"/>
</dbReference>
<dbReference type="InterPro" id="IPR004364">
    <property type="entry name" value="Aa-tRNA-synt_II"/>
</dbReference>
<dbReference type="InterPro" id="IPR006195">
    <property type="entry name" value="aa-tRNA-synth_II"/>
</dbReference>
<dbReference type="InterPro" id="IPR045864">
    <property type="entry name" value="aa-tRNA-synth_II/BPL/LPL"/>
</dbReference>
<dbReference type="InterPro" id="IPR002313">
    <property type="entry name" value="Lys-tRNA-ligase_II"/>
</dbReference>
<dbReference type="InterPro" id="IPR034762">
    <property type="entry name" value="Lys-tRNA-ligase_II_bac/euk"/>
</dbReference>
<dbReference type="InterPro" id="IPR044136">
    <property type="entry name" value="Lys-tRNA-ligase_II_N"/>
</dbReference>
<dbReference type="InterPro" id="IPR018149">
    <property type="entry name" value="Lys-tRNA-synth_II_C"/>
</dbReference>
<dbReference type="InterPro" id="IPR012340">
    <property type="entry name" value="NA-bd_OB-fold"/>
</dbReference>
<dbReference type="InterPro" id="IPR004365">
    <property type="entry name" value="NA-bd_OB_tRNA"/>
</dbReference>
<dbReference type="NCBIfam" id="TIGR00499">
    <property type="entry name" value="lysS_bact"/>
    <property type="match status" value="1"/>
</dbReference>
<dbReference type="NCBIfam" id="NF001756">
    <property type="entry name" value="PRK00484.1"/>
    <property type="match status" value="1"/>
</dbReference>
<dbReference type="PANTHER" id="PTHR42918:SF15">
    <property type="entry name" value="LYSINE--TRNA LIGASE, CHLOROPLASTIC_MITOCHONDRIAL"/>
    <property type="match status" value="1"/>
</dbReference>
<dbReference type="PANTHER" id="PTHR42918">
    <property type="entry name" value="LYSYL-TRNA SYNTHETASE"/>
    <property type="match status" value="1"/>
</dbReference>
<dbReference type="Pfam" id="PF00152">
    <property type="entry name" value="tRNA-synt_2"/>
    <property type="match status" value="1"/>
</dbReference>
<dbReference type="Pfam" id="PF01336">
    <property type="entry name" value="tRNA_anti-codon"/>
    <property type="match status" value="1"/>
</dbReference>
<dbReference type="PIRSF" id="PIRSF039101">
    <property type="entry name" value="LysRS2"/>
    <property type="match status" value="1"/>
</dbReference>
<dbReference type="PRINTS" id="PR00982">
    <property type="entry name" value="TRNASYNTHLYS"/>
</dbReference>
<dbReference type="SUPFAM" id="SSF55681">
    <property type="entry name" value="Class II aaRS and biotin synthetases"/>
    <property type="match status" value="1"/>
</dbReference>
<dbReference type="SUPFAM" id="SSF50249">
    <property type="entry name" value="Nucleic acid-binding proteins"/>
    <property type="match status" value="1"/>
</dbReference>
<dbReference type="PROSITE" id="PS50862">
    <property type="entry name" value="AA_TRNA_LIGASE_II"/>
    <property type="match status" value="1"/>
</dbReference>
<name>SYK_CLOB1</name>
<comment type="catalytic activity">
    <reaction evidence="1">
        <text>tRNA(Lys) + L-lysine + ATP = L-lysyl-tRNA(Lys) + AMP + diphosphate</text>
        <dbReference type="Rhea" id="RHEA:20792"/>
        <dbReference type="Rhea" id="RHEA-COMP:9696"/>
        <dbReference type="Rhea" id="RHEA-COMP:9697"/>
        <dbReference type="ChEBI" id="CHEBI:30616"/>
        <dbReference type="ChEBI" id="CHEBI:32551"/>
        <dbReference type="ChEBI" id="CHEBI:33019"/>
        <dbReference type="ChEBI" id="CHEBI:78442"/>
        <dbReference type="ChEBI" id="CHEBI:78529"/>
        <dbReference type="ChEBI" id="CHEBI:456215"/>
        <dbReference type="EC" id="6.1.1.6"/>
    </reaction>
</comment>
<comment type="cofactor">
    <cofactor evidence="1">
        <name>Mg(2+)</name>
        <dbReference type="ChEBI" id="CHEBI:18420"/>
    </cofactor>
    <text evidence="1">Binds 3 Mg(2+) ions per subunit.</text>
</comment>
<comment type="subunit">
    <text evidence="1">Homodimer.</text>
</comment>
<comment type="subcellular location">
    <subcellularLocation>
        <location evidence="1">Cytoplasm</location>
    </subcellularLocation>
</comment>
<comment type="similarity">
    <text evidence="1">Belongs to the class-II aminoacyl-tRNA synthetase family.</text>
</comment>
<sequence>MSKEDNVMNSFEEQANELMKERFQKLKELQSNGKDPFDVYKVERTHTSKEVKENYEDLEGKTVTVAGRLMSKRVHGKAGFSDIHDRYGKIQLYIKINDVGEEKLKEYKTFDIGDIISVTGTVFKTKTGETSIHITDFQLVCKSLRPLPEKWHGLKDPDLRYRQRYVDLIINQDVRDTFMKRTAIIKTMREYLDNKGFLEVETPILSPIAGGAAAKPFITHHNALNIDMYLRIATELYLKRLIVGGFEKVYEIGRNFRNEGMDIRHNPEFTVIELYEAYADYNDMMEITENMIAYICEKVLGTTKVQYEGTEIDFTPPWRRLTMVDAVREYAGVDFNTIKDDIEARTIAKEKHIEFKKELKDCTKGDVLIGLFEEFCEDKLMQPTFICDYPVENSPLTKKKRGNEAFTERFEGFVFGREVCNAYSELNDSIVQKERFMQQLKERELGDDEAYMMDDDFITSLEVGMPPTGGLGIGIDRLIMFLTDTHSIRDVILFPTMKPQPNNQ</sequence>